<dbReference type="EC" id="2.1.1.45" evidence="1"/>
<dbReference type="EMBL" id="CP000733">
    <property type="protein sequence ID" value="ABS77420.2"/>
    <property type="status" value="ALT_INIT"/>
    <property type="molecule type" value="Genomic_DNA"/>
</dbReference>
<dbReference type="RefSeq" id="WP_005772639.1">
    <property type="nucleotide sequence ID" value="NC_009727.1"/>
</dbReference>
<dbReference type="SMR" id="A9KF61"/>
<dbReference type="KEGG" id="cbd:CBUD_0442"/>
<dbReference type="HOGENOM" id="CLU_021669_0_2_6"/>
<dbReference type="UniPathway" id="UPA00575"/>
<dbReference type="Proteomes" id="UP000008555">
    <property type="component" value="Chromosome"/>
</dbReference>
<dbReference type="GO" id="GO:0005829">
    <property type="term" value="C:cytosol"/>
    <property type="evidence" value="ECO:0007669"/>
    <property type="project" value="TreeGrafter"/>
</dbReference>
<dbReference type="GO" id="GO:0004799">
    <property type="term" value="F:thymidylate synthase activity"/>
    <property type="evidence" value="ECO:0007669"/>
    <property type="project" value="UniProtKB-UniRule"/>
</dbReference>
<dbReference type="GO" id="GO:0006231">
    <property type="term" value="P:dTMP biosynthetic process"/>
    <property type="evidence" value="ECO:0007669"/>
    <property type="project" value="UniProtKB-UniRule"/>
</dbReference>
<dbReference type="GO" id="GO:0006235">
    <property type="term" value="P:dTTP biosynthetic process"/>
    <property type="evidence" value="ECO:0007669"/>
    <property type="project" value="UniProtKB-UniRule"/>
</dbReference>
<dbReference type="GO" id="GO:0032259">
    <property type="term" value="P:methylation"/>
    <property type="evidence" value="ECO:0007669"/>
    <property type="project" value="UniProtKB-KW"/>
</dbReference>
<dbReference type="CDD" id="cd00351">
    <property type="entry name" value="TS_Pyrimidine_HMase"/>
    <property type="match status" value="1"/>
</dbReference>
<dbReference type="FunFam" id="3.30.572.10:FF:000013">
    <property type="entry name" value="Thymidylate synthase"/>
    <property type="match status" value="1"/>
</dbReference>
<dbReference type="Gene3D" id="3.30.572.10">
    <property type="entry name" value="Thymidylate synthase/dCMP hydroxymethylase domain"/>
    <property type="match status" value="1"/>
</dbReference>
<dbReference type="HAMAP" id="MF_00008">
    <property type="entry name" value="Thymidy_synth_bact"/>
    <property type="match status" value="1"/>
</dbReference>
<dbReference type="InterPro" id="IPR045097">
    <property type="entry name" value="Thymidate_synth/dCMP_Mease"/>
</dbReference>
<dbReference type="InterPro" id="IPR023451">
    <property type="entry name" value="Thymidate_synth/dCMP_Mease_dom"/>
</dbReference>
<dbReference type="InterPro" id="IPR036926">
    <property type="entry name" value="Thymidate_synth/dCMP_Mease_sf"/>
</dbReference>
<dbReference type="InterPro" id="IPR000398">
    <property type="entry name" value="Thymidylate_synthase"/>
</dbReference>
<dbReference type="InterPro" id="IPR020940">
    <property type="entry name" value="Thymidylate_synthase_AS"/>
</dbReference>
<dbReference type="NCBIfam" id="NF002497">
    <property type="entry name" value="PRK01827.1-3"/>
    <property type="match status" value="1"/>
</dbReference>
<dbReference type="NCBIfam" id="NF002499">
    <property type="entry name" value="PRK01827.1-5"/>
    <property type="match status" value="1"/>
</dbReference>
<dbReference type="NCBIfam" id="TIGR03284">
    <property type="entry name" value="thym_sym"/>
    <property type="match status" value="2"/>
</dbReference>
<dbReference type="PANTHER" id="PTHR11548:SF9">
    <property type="entry name" value="THYMIDYLATE SYNTHASE"/>
    <property type="match status" value="1"/>
</dbReference>
<dbReference type="PANTHER" id="PTHR11548">
    <property type="entry name" value="THYMIDYLATE SYNTHASE 1"/>
    <property type="match status" value="1"/>
</dbReference>
<dbReference type="Pfam" id="PF00303">
    <property type="entry name" value="Thymidylat_synt"/>
    <property type="match status" value="1"/>
</dbReference>
<dbReference type="PRINTS" id="PR00108">
    <property type="entry name" value="THYMDSNTHASE"/>
</dbReference>
<dbReference type="SUPFAM" id="SSF55831">
    <property type="entry name" value="Thymidylate synthase/dCMP hydroxymethylase"/>
    <property type="match status" value="1"/>
</dbReference>
<dbReference type="PROSITE" id="PS00091">
    <property type="entry name" value="THYMIDYLATE_SYNTHASE"/>
    <property type="match status" value="1"/>
</dbReference>
<feature type="chain" id="PRO_1000073872" description="Thymidylate synthase">
    <location>
        <begin position="1"/>
        <end position="264"/>
    </location>
</feature>
<feature type="active site" description="Nucleophile" evidence="1">
    <location>
        <position position="146"/>
    </location>
</feature>
<feature type="binding site" description="in other chain" evidence="1">
    <location>
        <position position="21"/>
    </location>
    <ligand>
        <name>dUMP</name>
        <dbReference type="ChEBI" id="CHEBI:246422"/>
        <note>ligand shared between dimeric partners</note>
    </ligand>
</feature>
<feature type="binding site" evidence="1">
    <location>
        <position position="51"/>
    </location>
    <ligand>
        <name>(6R)-5,10-methylene-5,6,7,8-tetrahydrofolate</name>
        <dbReference type="ChEBI" id="CHEBI:15636"/>
    </ligand>
</feature>
<feature type="binding site" evidence="1">
    <location>
        <begin position="126"/>
        <end position="127"/>
    </location>
    <ligand>
        <name>dUMP</name>
        <dbReference type="ChEBI" id="CHEBI:246422"/>
        <note>ligand shared between dimeric partners</note>
    </ligand>
</feature>
<feature type="binding site" description="in other chain" evidence="1">
    <location>
        <begin position="166"/>
        <end position="169"/>
    </location>
    <ligand>
        <name>dUMP</name>
        <dbReference type="ChEBI" id="CHEBI:246422"/>
        <note>ligand shared between dimeric partners</note>
    </ligand>
</feature>
<feature type="binding site" evidence="1">
    <location>
        <position position="169"/>
    </location>
    <ligand>
        <name>(6R)-5,10-methylene-5,6,7,8-tetrahydrofolate</name>
        <dbReference type="ChEBI" id="CHEBI:15636"/>
    </ligand>
</feature>
<feature type="binding site" description="in other chain" evidence="1">
    <location>
        <position position="177"/>
    </location>
    <ligand>
        <name>dUMP</name>
        <dbReference type="ChEBI" id="CHEBI:246422"/>
        <note>ligand shared between dimeric partners</note>
    </ligand>
</feature>
<feature type="binding site" description="in other chain" evidence="1">
    <location>
        <begin position="207"/>
        <end position="209"/>
    </location>
    <ligand>
        <name>dUMP</name>
        <dbReference type="ChEBI" id="CHEBI:246422"/>
        <note>ligand shared between dimeric partners</note>
    </ligand>
</feature>
<feature type="binding site" evidence="1">
    <location>
        <position position="263"/>
    </location>
    <ligand>
        <name>(6R)-5,10-methylene-5,6,7,8-tetrahydrofolate</name>
        <dbReference type="ChEBI" id="CHEBI:15636"/>
    </ligand>
</feature>
<gene>
    <name evidence="1" type="primary">thyA</name>
    <name type="ordered locus">CBUD_0442</name>
</gene>
<organism>
    <name type="scientific">Coxiella burnetii (strain Dugway 5J108-111)</name>
    <dbReference type="NCBI Taxonomy" id="434922"/>
    <lineage>
        <taxon>Bacteria</taxon>
        <taxon>Pseudomonadati</taxon>
        <taxon>Pseudomonadota</taxon>
        <taxon>Gammaproteobacteria</taxon>
        <taxon>Legionellales</taxon>
        <taxon>Coxiellaceae</taxon>
        <taxon>Coxiella</taxon>
    </lineage>
</organism>
<comment type="function">
    <text evidence="1">Catalyzes the reductive methylation of 2'-deoxyuridine-5'-monophosphate (dUMP) to 2'-deoxythymidine-5'-monophosphate (dTMP) while utilizing 5,10-methylenetetrahydrofolate (mTHF) as the methyl donor and reductant in the reaction, yielding dihydrofolate (DHF) as a by-product. This enzymatic reaction provides an intracellular de novo source of dTMP, an essential precursor for DNA biosynthesis.</text>
</comment>
<comment type="catalytic activity">
    <reaction evidence="1">
        <text>dUMP + (6R)-5,10-methylene-5,6,7,8-tetrahydrofolate = 7,8-dihydrofolate + dTMP</text>
        <dbReference type="Rhea" id="RHEA:12104"/>
        <dbReference type="ChEBI" id="CHEBI:15636"/>
        <dbReference type="ChEBI" id="CHEBI:57451"/>
        <dbReference type="ChEBI" id="CHEBI:63528"/>
        <dbReference type="ChEBI" id="CHEBI:246422"/>
        <dbReference type="EC" id="2.1.1.45"/>
    </reaction>
</comment>
<comment type="pathway">
    <text evidence="1">Pyrimidine metabolism; dTTP biosynthesis.</text>
</comment>
<comment type="subunit">
    <text evidence="1">Homodimer.</text>
</comment>
<comment type="subcellular location">
    <subcellularLocation>
        <location evidence="1">Cytoplasm</location>
    </subcellularLocation>
</comment>
<comment type="similarity">
    <text evidence="1">Belongs to the thymidylate synthase family. Bacterial-type ThyA subfamily.</text>
</comment>
<comment type="sequence caution" evidence="2">
    <conflict type="erroneous initiation">
        <sequence resource="EMBL-CDS" id="ABS77420"/>
    </conflict>
</comment>
<accession>A9KF61</accession>
<reference key="1">
    <citation type="journal article" date="2009" name="Infect. Immun.">
        <title>Comparative genomics reveal extensive transposon-mediated genomic plasticity and diversity among potential effector proteins within the genus Coxiella.</title>
        <authorList>
            <person name="Beare P.A."/>
            <person name="Unsworth N."/>
            <person name="Andoh M."/>
            <person name="Voth D.E."/>
            <person name="Omsland A."/>
            <person name="Gilk S.D."/>
            <person name="Williams K.P."/>
            <person name="Sobral B.W."/>
            <person name="Kupko J.J. III"/>
            <person name="Porcella S.F."/>
            <person name="Samuel J.E."/>
            <person name="Heinzen R.A."/>
        </authorList>
    </citation>
    <scope>NUCLEOTIDE SEQUENCE [LARGE SCALE GENOMIC DNA]</scope>
    <source>
        <strain>Dugway 5J108-111</strain>
    </source>
</reference>
<keyword id="KW-0963">Cytoplasm</keyword>
<keyword id="KW-0489">Methyltransferase</keyword>
<keyword id="KW-0545">Nucleotide biosynthesis</keyword>
<keyword id="KW-0808">Transferase</keyword>
<sequence>MKEYLNFLQFILDHGVAKTDRTGIGTKSVFGYEMRFNLREGFPLVTTKKIHLKSVIYELLWFLRGDTNIQFLNDNGVTIWDEWADENGDLGPIYGKQWRRWHCPDGRTVDQMQRLIREIKTNPDSRRLIVSAWNVGELDQMALPPCHLLFQFYVADGFLSCKLTQRSADAFLGVPFNIASYSLLTHLIARQCNLKAGEFIWSGGDCHIYNTHQDQVSTQLSREPRALPQLIINRDPSSLYDYNFNDFSIVNYHPHPAIKAPVAV</sequence>
<proteinExistence type="inferred from homology"/>
<name>TYSY_COXBN</name>
<protein>
    <recommendedName>
        <fullName evidence="1">Thymidylate synthase</fullName>
        <shortName evidence="1">TS</shortName>
        <shortName evidence="1">TSase</shortName>
        <ecNumber evidence="1">2.1.1.45</ecNumber>
    </recommendedName>
</protein>
<evidence type="ECO:0000255" key="1">
    <source>
        <dbReference type="HAMAP-Rule" id="MF_00008"/>
    </source>
</evidence>
<evidence type="ECO:0000305" key="2"/>